<reference key="1">
    <citation type="submission" date="2008-10" db="EMBL/GenBank/DDBJ databases">
        <title>Genome sequence of Ureaplasma urealyticum serovar 10 ATCC-33699.</title>
        <authorList>
            <person name="Shrivastava S."/>
            <person name="Methe B.A."/>
            <person name="Glass J."/>
            <person name="White K."/>
            <person name="Duffy L.B."/>
        </authorList>
    </citation>
    <scope>NUCLEOTIDE SEQUENCE [LARGE SCALE GENOMIC DNA]</scope>
    <source>
        <strain>ATCC 33699 / Western</strain>
    </source>
</reference>
<gene>
    <name evidence="1" type="primary">atpG</name>
    <name type="ordered locus">UUR10_0145</name>
</gene>
<comment type="function">
    <text evidence="1">Produces ATP from ADP in the presence of a proton gradient across the membrane. The gamma chain is believed to be important in regulating ATPase activity and the flow of protons through the CF(0) complex.</text>
</comment>
<comment type="subunit">
    <text evidence="1">F-type ATPases have 2 components, CF(1) - the catalytic core - and CF(0) - the membrane proton channel. CF(1) has five subunits: alpha(3), beta(3), gamma(1), delta(1), epsilon(1). CF(0) has three main subunits: a, b and c.</text>
</comment>
<comment type="subcellular location">
    <subcellularLocation>
        <location evidence="1">Cell membrane</location>
        <topology evidence="1">Peripheral membrane protein</topology>
    </subcellularLocation>
</comment>
<comment type="similarity">
    <text evidence="1">Belongs to the ATPase gamma chain family.</text>
</comment>
<dbReference type="EMBL" id="CP001184">
    <property type="protein sequence ID" value="ACI60000.1"/>
    <property type="molecule type" value="Genomic_DNA"/>
</dbReference>
<dbReference type="RefSeq" id="WP_012560252.1">
    <property type="nucleotide sequence ID" value="NC_011374.1"/>
</dbReference>
<dbReference type="SMR" id="B5ZAW2"/>
<dbReference type="STRING" id="565575.UUR10_0145"/>
<dbReference type="KEGG" id="uue:UUR10_0145"/>
<dbReference type="eggNOG" id="COG0224">
    <property type="taxonomic scope" value="Bacteria"/>
</dbReference>
<dbReference type="HOGENOM" id="CLU_050669_0_1_14"/>
<dbReference type="OrthoDB" id="9812769at2"/>
<dbReference type="Proteomes" id="UP000002018">
    <property type="component" value="Chromosome"/>
</dbReference>
<dbReference type="GO" id="GO:0005886">
    <property type="term" value="C:plasma membrane"/>
    <property type="evidence" value="ECO:0007669"/>
    <property type="project" value="UniProtKB-SubCell"/>
</dbReference>
<dbReference type="GO" id="GO:0045259">
    <property type="term" value="C:proton-transporting ATP synthase complex"/>
    <property type="evidence" value="ECO:0007669"/>
    <property type="project" value="UniProtKB-KW"/>
</dbReference>
<dbReference type="GO" id="GO:0005524">
    <property type="term" value="F:ATP binding"/>
    <property type="evidence" value="ECO:0007669"/>
    <property type="project" value="UniProtKB-UniRule"/>
</dbReference>
<dbReference type="GO" id="GO:0046933">
    <property type="term" value="F:proton-transporting ATP synthase activity, rotational mechanism"/>
    <property type="evidence" value="ECO:0007669"/>
    <property type="project" value="UniProtKB-UniRule"/>
</dbReference>
<dbReference type="GO" id="GO:0042777">
    <property type="term" value="P:proton motive force-driven plasma membrane ATP synthesis"/>
    <property type="evidence" value="ECO:0007669"/>
    <property type="project" value="UniProtKB-UniRule"/>
</dbReference>
<dbReference type="CDD" id="cd12151">
    <property type="entry name" value="F1-ATPase_gamma"/>
    <property type="match status" value="1"/>
</dbReference>
<dbReference type="Gene3D" id="3.40.1380.10">
    <property type="match status" value="1"/>
</dbReference>
<dbReference type="Gene3D" id="1.10.287.80">
    <property type="entry name" value="ATP synthase, gamma subunit, helix hairpin domain"/>
    <property type="match status" value="1"/>
</dbReference>
<dbReference type="HAMAP" id="MF_00815">
    <property type="entry name" value="ATP_synth_gamma_bact"/>
    <property type="match status" value="1"/>
</dbReference>
<dbReference type="InterPro" id="IPR035968">
    <property type="entry name" value="ATP_synth_F1_ATPase_gsu"/>
</dbReference>
<dbReference type="InterPro" id="IPR000131">
    <property type="entry name" value="ATP_synth_F1_gsu"/>
</dbReference>
<dbReference type="NCBIfam" id="TIGR01146">
    <property type="entry name" value="ATPsyn_F1gamma"/>
    <property type="match status" value="1"/>
</dbReference>
<dbReference type="PANTHER" id="PTHR11693">
    <property type="entry name" value="ATP SYNTHASE GAMMA CHAIN"/>
    <property type="match status" value="1"/>
</dbReference>
<dbReference type="PANTHER" id="PTHR11693:SF22">
    <property type="entry name" value="ATP SYNTHASE SUBUNIT GAMMA, MITOCHONDRIAL"/>
    <property type="match status" value="1"/>
</dbReference>
<dbReference type="Pfam" id="PF00231">
    <property type="entry name" value="ATP-synt"/>
    <property type="match status" value="1"/>
</dbReference>
<dbReference type="PRINTS" id="PR00126">
    <property type="entry name" value="ATPASEGAMMA"/>
</dbReference>
<dbReference type="SUPFAM" id="SSF52943">
    <property type="entry name" value="ATP synthase (F1-ATPase), gamma subunit"/>
    <property type="match status" value="1"/>
</dbReference>
<evidence type="ECO:0000255" key="1">
    <source>
        <dbReference type="HAMAP-Rule" id="MF_00815"/>
    </source>
</evidence>
<proteinExistence type="inferred from homology"/>
<sequence length="286" mass="32343">MSLDAIKRKISSVQTTAKITNAMKLVATAKLKRQRDRLAAIKEYCHDYYDVIGLLLSVVNDIEFLKIPNAKNRTLYITINSTMGLAGSYNYNVNKLVSKIINEDDITFTIGKKGHDFMRLSNRLHQVNTYLNLNDNDLTFDMSLQIAREALELYSNGEVNKICIIYTKFINAITFEVNNIDVLPFDKTVLTKDNLAETIELAKDNIIFQPNKVELVKKILPTYIATVLYGSLIESKISENASRRNAMDAATKNAKALAEDYKLIYNTLRQGKITREITEIVAGSDD</sequence>
<feature type="chain" id="PRO_1000134218" description="ATP synthase gamma chain">
    <location>
        <begin position="1"/>
        <end position="286"/>
    </location>
</feature>
<name>ATPG_UREU1</name>
<organism>
    <name type="scientific">Ureaplasma urealyticum serovar 10 (strain ATCC 33699 / Western)</name>
    <dbReference type="NCBI Taxonomy" id="565575"/>
    <lineage>
        <taxon>Bacteria</taxon>
        <taxon>Bacillati</taxon>
        <taxon>Mycoplasmatota</taxon>
        <taxon>Mycoplasmoidales</taxon>
        <taxon>Mycoplasmoidaceae</taxon>
        <taxon>Ureaplasma</taxon>
    </lineage>
</organism>
<protein>
    <recommendedName>
        <fullName evidence="1">ATP synthase gamma chain</fullName>
    </recommendedName>
    <alternativeName>
        <fullName evidence="1">ATP synthase F1 sector gamma subunit</fullName>
    </alternativeName>
    <alternativeName>
        <fullName evidence="1">F-ATPase gamma subunit</fullName>
    </alternativeName>
</protein>
<accession>B5ZAW2</accession>
<keyword id="KW-0066">ATP synthesis</keyword>
<keyword id="KW-1003">Cell membrane</keyword>
<keyword id="KW-0139">CF(1)</keyword>
<keyword id="KW-0375">Hydrogen ion transport</keyword>
<keyword id="KW-0406">Ion transport</keyword>
<keyword id="KW-0472">Membrane</keyword>
<keyword id="KW-0813">Transport</keyword>